<sequence>MSHSVEYIIQHIPPVDTSLAGAAQAHLDNLTKPRGSLGRLEELALRLYCIQGGDTPLAADPARIYTIAGDHGVAAEGVSPFPQEVTRQMVLNFLSNGAGINVLCNTVGCEQFVVDAGSCGGAYPEHPRLIQRKIHPGTASIAQGPAMTAEQCRQALQLGIDLAGMAREAGCRTVGTGEMGISNTTPSTALYCAYLGLDPAGITGPGAGITPDLVKHKTDIIRRALAVNAGAVQSQNAVDILAALGGYEIAALTGLILGAAYHRMAVLVDGFISTAAWTAAWKICPAVSDYSFFSHASAEAGHKTALRSMGIEPLHDLGLRLGEGTGAALTLFLLRSAAAIFNDMATFSSAGVATQSSC</sequence>
<organism>
    <name type="scientific">Oleidesulfovibrio alaskensis (strain ATCC BAA-1058 / DSM 17464 / G20)</name>
    <name type="common">Desulfovibrio alaskensis</name>
    <dbReference type="NCBI Taxonomy" id="207559"/>
    <lineage>
        <taxon>Bacteria</taxon>
        <taxon>Pseudomonadati</taxon>
        <taxon>Thermodesulfobacteriota</taxon>
        <taxon>Desulfovibrionia</taxon>
        <taxon>Desulfovibrionales</taxon>
        <taxon>Desulfovibrionaceae</taxon>
        <taxon>Oleidesulfovibrio</taxon>
    </lineage>
</organism>
<dbReference type="EC" id="2.4.2.21" evidence="1"/>
<dbReference type="EMBL" id="CP000112">
    <property type="protein sequence ID" value="ABB40569.1"/>
    <property type="molecule type" value="Genomic_DNA"/>
</dbReference>
<dbReference type="RefSeq" id="WP_011369416.1">
    <property type="nucleotide sequence ID" value="NC_007519.1"/>
</dbReference>
<dbReference type="SMR" id="Q30US7"/>
<dbReference type="STRING" id="207559.Dde_3777"/>
<dbReference type="KEGG" id="dde:Dde_3777"/>
<dbReference type="eggNOG" id="COG2038">
    <property type="taxonomic scope" value="Bacteria"/>
</dbReference>
<dbReference type="HOGENOM" id="CLU_002982_0_0_7"/>
<dbReference type="UniPathway" id="UPA00061">
    <property type="reaction ID" value="UER00516"/>
</dbReference>
<dbReference type="Proteomes" id="UP000002710">
    <property type="component" value="Chromosome"/>
</dbReference>
<dbReference type="GO" id="GO:0008939">
    <property type="term" value="F:nicotinate-nucleotide-dimethylbenzimidazole phosphoribosyltransferase activity"/>
    <property type="evidence" value="ECO:0007669"/>
    <property type="project" value="UniProtKB-UniRule"/>
</dbReference>
<dbReference type="GO" id="GO:0009236">
    <property type="term" value="P:cobalamin biosynthetic process"/>
    <property type="evidence" value="ECO:0007669"/>
    <property type="project" value="UniProtKB-KW"/>
</dbReference>
<dbReference type="CDD" id="cd02439">
    <property type="entry name" value="DMB-PRT_CobT"/>
    <property type="match status" value="1"/>
</dbReference>
<dbReference type="FunFam" id="3.40.50.10210:FF:000001">
    <property type="entry name" value="Nicotinate-nucleotide--dimethylbenzimidazole phosphoribosyltransferase"/>
    <property type="match status" value="1"/>
</dbReference>
<dbReference type="Gene3D" id="1.10.1610.10">
    <property type="match status" value="1"/>
</dbReference>
<dbReference type="Gene3D" id="3.40.50.10210">
    <property type="match status" value="1"/>
</dbReference>
<dbReference type="HAMAP" id="MF_00230">
    <property type="entry name" value="CobT"/>
    <property type="match status" value="1"/>
</dbReference>
<dbReference type="InterPro" id="IPR003200">
    <property type="entry name" value="Nict_dMeBzImd_PRibTrfase"/>
</dbReference>
<dbReference type="InterPro" id="IPR017846">
    <property type="entry name" value="Nict_dMeBzImd_PRibTrfase_bact"/>
</dbReference>
<dbReference type="InterPro" id="IPR023195">
    <property type="entry name" value="Nict_dMeBzImd_PRibTrfase_N"/>
</dbReference>
<dbReference type="InterPro" id="IPR036087">
    <property type="entry name" value="Nict_dMeBzImd_PRibTrfase_sf"/>
</dbReference>
<dbReference type="NCBIfam" id="TIGR03160">
    <property type="entry name" value="cobT_DBIPRT"/>
    <property type="match status" value="1"/>
</dbReference>
<dbReference type="NCBIfam" id="NF000996">
    <property type="entry name" value="PRK00105.1"/>
    <property type="match status" value="1"/>
</dbReference>
<dbReference type="PANTHER" id="PTHR43463">
    <property type="entry name" value="NICOTINATE-NUCLEOTIDE--DIMETHYLBENZIMIDAZOLE PHOSPHORIBOSYLTRANSFERASE"/>
    <property type="match status" value="1"/>
</dbReference>
<dbReference type="PANTHER" id="PTHR43463:SF1">
    <property type="entry name" value="NICOTINATE-NUCLEOTIDE--DIMETHYLBENZIMIDAZOLE PHOSPHORIBOSYLTRANSFERASE"/>
    <property type="match status" value="1"/>
</dbReference>
<dbReference type="Pfam" id="PF02277">
    <property type="entry name" value="DBI_PRT"/>
    <property type="match status" value="1"/>
</dbReference>
<dbReference type="SUPFAM" id="SSF52733">
    <property type="entry name" value="Nicotinate mononucleotide:5,6-dimethylbenzimidazole phosphoribosyltransferase (CobT)"/>
    <property type="match status" value="1"/>
</dbReference>
<reference key="1">
    <citation type="journal article" date="2011" name="J. Bacteriol.">
        <title>Complete genome sequence and updated annotation of Desulfovibrio alaskensis G20.</title>
        <authorList>
            <person name="Hauser L.J."/>
            <person name="Land M.L."/>
            <person name="Brown S.D."/>
            <person name="Larimer F."/>
            <person name="Keller K.L."/>
            <person name="Rapp-Giles B.J."/>
            <person name="Price M.N."/>
            <person name="Lin M."/>
            <person name="Bruce D.C."/>
            <person name="Detter J.C."/>
            <person name="Tapia R."/>
            <person name="Han C.S."/>
            <person name="Goodwin L.A."/>
            <person name="Cheng J.F."/>
            <person name="Pitluck S."/>
            <person name="Copeland A."/>
            <person name="Lucas S."/>
            <person name="Nolan M."/>
            <person name="Lapidus A.L."/>
            <person name="Palumbo A.V."/>
            <person name="Wall J.D."/>
        </authorList>
    </citation>
    <scope>NUCLEOTIDE SEQUENCE [LARGE SCALE GENOMIC DNA]</scope>
    <source>
        <strain>ATCC BAA-1058 / DSM 17464 / G20</strain>
    </source>
</reference>
<evidence type="ECO:0000255" key="1">
    <source>
        <dbReference type="HAMAP-Rule" id="MF_00230"/>
    </source>
</evidence>
<protein>
    <recommendedName>
        <fullName evidence="1">Nicotinate-nucleotide--dimethylbenzimidazole phosphoribosyltransferase</fullName>
        <shortName evidence="1">NN:DBI PRT</shortName>
        <ecNumber evidence="1">2.4.2.21</ecNumber>
    </recommendedName>
    <alternativeName>
        <fullName evidence="1">N(1)-alpha-phosphoribosyltransferase</fullName>
    </alternativeName>
</protein>
<name>COBT_OLEA2</name>
<feature type="chain" id="PRO_1000021590" description="Nicotinate-nucleotide--dimethylbenzimidazole phosphoribosyltransferase">
    <location>
        <begin position="1"/>
        <end position="358"/>
    </location>
</feature>
<feature type="active site" description="Proton acceptor" evidence="1">
    <location>
        <position position="323"/>
    </location>
</feature>
<keyword id="KW-0169">Cobalamin biosynthesis</keyword>
<keyword id="KW-0328">Glycosyltransferase</keyword>
<keyword id="KW-1185">Reference proteome</keyword>
<keyword id="KW-0808">Transferase</keyword>
<comment type="function">
    <text evidence="1">Catalyzes the synthesis of alpha-ribazole-5'-phosphate from nicotinate mononucleotide (NAMN) and 5,6-dimethylbenzimidazole (DMB).</text>
</comment>
<comment type="catalytic activity">
    <reaction evidence="1">
        <text>5,6-dimethylbenzimidazole + nicotinate beta-D-ribonucleotide = alpha-ribazole 5'-phosphate + nicotinate + H(+)</text>
        <dbReference type="Rhea" id="RHEA:11196"/>
        <dbReference type="ChEBI" id="CHEBI:15378"/>
        <dbReference type="ChEBI" id="CHEBI:15890"/>
        <dbReference type="ChEBI" id="CHEBI:32544"/>
        <dbReference type="ChEBI" id="CHEBI:57502"/>
        <dbReference type="ChEBI" id="CHEBI:57918"/>
        <dbReference type="EC" id="2.4.2.21"/>
    </reaction>
</comment>
<comment type="pathway">
    <text evidence="1">Nucleoside biosynthesis; alpha-ribazole biosynthesis; alpha-ribazole from 5,6-dimethylbenzimidazole: step 1/2.</text>
</comment>
<comment type="similarity">
    <text evidence="1">Belongs to the CobT family.</text>
</comment>
<accession>Q30US7</accession>
<proteinExistence type="inferred from homology"/>
<gene>
    <name evidence="1" type="primary">cobT</name>
    <name type="ordered locus">Dde_3777</name>
</gene>